<comment type="function">
    <text evidence="1">Condensation of UDP-2,3-diacylglucosamine and 2,3-diacylglucosamine-1-phosphate to form lipid A disaccharide, a precursor of lipid A, a phosphorylated glycolipid that anchors the lipopolysaccharide to the outer membrane of the cell.</text>
</comment>
<comment type="catalytic activity">
    <reaction evidence="1">
        <text>2-N,3-O-bis[(3R)-3-hydroxytetradecanoyl]-alpha-D-glucosaminyl 1-phosphate + UDP-2-N,3-O-bis[(3R)-3-hydroxytetradecanoyl]-alpha-D-glucosamine = lipid A disaccharide (E. coli) + UDP + H(+)</text>
        <dbReference type="Rhea" id="RHEA:22668"/>
        <dbReference type="ChEBI" id="CHEBI:15378"/>
        <dbReference type="ChEBI" id="CHEBI:57957"/>
        <dbReference type="ChEBI" id="CHEBI:58223"/>
        <dbReference type="ChEBI" id="CHEBI:58466"/>
        <dbReference type="ChEBI" id="CHEBI:78847"/>
    </reaction>
</comment>
<comment type="catalytic activity">
    <reaction evidence="1">
        <text>a lipid X + a UDP-2-N,3-O-bis[(3R)-3-hydroxyacyl]-alpha-D-glucosamine = a lipid A disaccharide + UDP + H(+)</text>
        <dbReference type="Rhea" id="RHEA:67828"/>
        <dbReference type="ChEBI" id="CHEBI:15378"/>
        <dbReference type="ChEBI" id="CHEBI:58223"/>
        <dbReference type="ChEBI" id="CHEBI:137748"/>
        <dbReference type="ChEBI" id="CHEBI:176338"/>
        <dbReference type="ChEBI" id="CHEBI:176343"/>
        <dbReference type="EC" id="2.4.1.182"/>
    </reaction>
</comment>
<comment type="pathway">
    <text evidence="1">Glycolipid biosynthesis; lipid IV(A) biosynthesis; lipid IV(A) from (3R)-3-hydroxytetradecanoyl-[acyl-carrier-protein] and UDP-N-acetyl-alpha-D-glucosamine: step 5/6.</text>
</comment>
<comment type="similarity">
    <text evidence="1">Belongs to the LpxB family.</text>
</comment>
<proteinExistence type="inferred from homology"/>
<feature type="chain" id="PRO_1000123066" description="Lipid-A-disaccharide synthase">
    <location>
        <begin position="1"/>
        <end position="382"/>
    </location>
</feature>
<protein>
    <recommendedName>
        <fullName evidence="1">Lipid-A-disaccharide synthase</fullName>
        <ecNumber evidence="1">2.4.1.182</ecNumber>
    </recommendedName>
</protein>
<sequence length="382" mass="42448">MTEQRPLTIALVAGETSGDILGAGLIRALKERVPNARFVGVAGPRMQAEGCEAWYEMEELAVMGIVEVLGRLRRLLHIRADLTKRFGELKPDVFVGIDAPDFNITLEGNLKKQGIKTIHYVSPSVWAWRQKRVFKIGRATDLVLAFLPFEKAFYDKYNVPCRFIGHTMADAMPLDPDKNAARDVLGIPHDAHCLALLPGSRGAEVEMLSADFLKTAQLLRQTYPDLEIVVPLVNAKRREQFERIKAEVAPDFSVHLLDGMGREAMVASDAALLASGTAALECMLAKCPMVVGYRMKPFTFWLAKRLVKTDYVSLPNLLAGRELVKELLQEECEPQKLAAALLPLLANGKISHAMHDTFRELHQQIRCNADEQAAQAVLELAQ</sequence>
<evidence type="ECO:0000255" key="1">
    <source>
        <dbReference type="HAMAP-Rule" id="MF_00392"/>
    </source>
</evidence>
<reference key="1">
    <citation type="submission" date="2008-05" db="EMBL/GenBank/DDBJ databases">
        <title>Complete sequence of Shigella boydii serotype 18 strain BS512.</title>
        <authorList>
            <person name="Rasko D.A."/>
            <person name="Rosovitz M."/>
            <person name="Maurelli A.T."/>
            <person name="Myers G."/>
            <person name="Seshadri R."/>
            <person name="Cer R."/>
            <person name="Jiang L."/>
            <person name="Ravel J."/>
            <person name="Sebastian Y."/>
        </authorList>
    </citation>
    <scope>NUCLEOTIDE SEQUENCE [LARGE SCALE GENOMIC DNA]</scope>
    <source>
        <strain>CDC 3083-94 / BS512</strain>
    </source>
</reference>
<organism>
    <name type="scientific">Shigella boydii serotype 18 (strain CDC 3083-94 / BS512)</name>
    <dbReference type="NCBI Taxonomy" id="344609"/>
    <lineage>
        <taxon>Bacteria</taxon>
        <taxon>Pseudomonadati</taxon>
        <taxon>Pseudomonadota</taxon>
        <taxon>Gammaproteobacteria</taxon>
        <taxon>Enterobacterales</taxon>
        <taxon>Enterobacteriaceae</taxon>
        <taxon>Shigella</taxon>
    </lineage>
</organism>
<dbReference type="EC" id="2.4.1.182" evidence="1"/>
<dbReference type="EMBL" id="CP001063">
    <property type="protein sequence ID" value="ACD07969.1"/>
    <property type="molecule type" value="Genomic_DNA"/>
</dbReference>
<dbReference type="RefSeq" id="WP_000139665.1">
    <property type="nucleotide sequence ID" value="NC_010658.1"/>
</dbReference>
<dbReference type="SMR" id="B2U325"/>
<dbReference type="STRING" id="344609.SbBS512_E0175"/>
<dbReference type="CAZy" id="GT19">
    <property type="family name" value="Glycosyltransferase Family 19"/>
</dbReference>
<dbReference type="KEGG" id="sbc:SbBS512_E0175"/>
<dbReference type="HOGENOM" id="CLU_036577_3_0_6"/>
<dbReference type="UniPathway" id="UPA00359">
    <property type="reaction ID" value="UER00481"/>
</dbReference>
<dbReference type="Proteomes" id="UP000001030">
    <property type="component" value="Chromosome"/>
</dbReference>
<dbReference type="GO" id="GO:0016020">
    <property type="term" value="C:membrane"/>
    <property type="evidence" value="ECO:0007669"/>
    <property type="project" value="GOC"/>
</dbReference>
<dbReference type="GO" id="GO:0008915">
    <property type="term" value="F:lipid-A-disaccharide synthase activity"/>
    <property type="evidence" value="ECO:0007669"/>
    <property type="project" value="UniProtKB-UniRule"/>
</dbReference>
<dbReference type="GO" id="GO:0005543">
    <property type="term" value="F:phospholipid binding"/>
    <property type="evidence" value="ECO:0007669"/>
    <property type="project" value="TreeGrafter"/>
</dbReference>
<dbReference type="GO" id="GO:0009245">
    <property type="term" value="P:lipid A biosynthetic process"/>
    <property type="evidence" value="ECO:0007669"/>
    <property type="project" value="UniProtKB-UniRule"/>
</dbReference>
<dbReference type="CDD" id="cd01635">
    <property type="entry name" value="Glycosyltransferase_GTB-type"/>
    <property type="match status" value="1"/>
</dbReference>
<dbReference type="HAMAP" id="MF_00392">
    <property type="entry name" value="LpxB"/>
    <property type="match status" value="1"/>
</dbReference>
<dbReference type="InterPro" id="IPR003835">
    <property type="entry name" value="Glyco_trans_19"/>
</dbReference>
<dbReference type="NCBIfam" id="TIGR00215">
    <property type="entry name" value="lpxB"/>
    <property type="match status" value="1"/>
</dbReference>
<dbReference type="PANTHER" id="PTHR30372">
    <property type="entry name" value="LIPID-A-DISACCHARIDE SYNTHASE"/>
    <property type="match status" value="1"/>
</dbReference>
<dbReference type="PANTHER" id="PTHR30372:SF4">
    <property type="entry name" value="LIPID-A-DISACCHARIDE SYNTHASE, MITOCHONDRIAL-RELATED"/>
    <property type="match status" value="1"/>
</dbReference>
<dbReference type="Pfam" id="PF02684">
    <property type="entry name" value="LpxB"/>
    <property type="match status" value="1"/>
</dbReference>
<dbReference type="SUPFAM" id="SSF53756">
    <property type="entry name" value="UDP-Glycosyltransferase/glycogen phosphorylase"/>
    <property type="match status" value="1"/>
</dbReference>
<name>LPXB_SHIB3</name>
<accession>B2U325</accession>
<keyword id="KW-0328">Glycosyltransferase</keyword>
<keyword id="KW-0441">Lipid A biosynthesis</keyword>
<keyword id="KW-0444">Lipid biosynthesis</keyword>
<keyword id="KW-0443">Lipid metabolism</keyword>
<keyword id="KW-1185">Reference proteome</keyword>
<keyword id="KW-0808">Transferase</keyword>
<gene>
    <name evidence="1" type="primary">lpxB</name>
    <name type="ordered locus">SbBS512_E0175</name>
</gene>